<keyword id="KW-1003">Cell membrane</keyword>
<keyword id="KW-0903">Direct protein sequencing</keyword>
<keyword id="KW-0325">Glycoprotein</keyword>
<keyword id="KW-0336">GPI-anchor</keyword>
<keyword id="KW-0449">Lipoprotein</keyword>
<keyword id="KW-0472">Membrane</keyword>
<keyword id="KW-0597">Phosphoprotein</keyword>
<organism>
    <name type="scientific">Trypanosoma cruzi</name>
    <dbReference type="NCBI Taxonomy" id="5693"/>
    <lineage>
        <taxon>Eukaryota</taxon>
        <taxon>Discoba</taxon>
        <taxon>Euglenozoa</taxon>
        <taxon>Kinetoplastea</taxon>
        <taxon>Metakinetoplastina</taxon>
        <taxon>Trypanosomatida</taxon>
        <taxon>Trypanosomatidae</taxon>
        <taxon>Trypanosoma</taxon>
        <taxon>Schizotrypanum</taxon>
    </lineage>
</organism>
<proteinExistence type="evidence at protein level"/>
<sequence>AQENETNESGSID</sequence>
<accession>P84883</accession>
<reference evidence="2" key="1">
    <citation type="journal article" date="2005" name="J. Biol. Chem.">
        <title>Structural characterization of NETNES, a novel glycoconjugate in Trypanosoma cruzi epimastigotes.</title>
        <authorList>
            <person name="Macrae J.I."/>
            <person name="Acosta-Serrano A."/>
            <person name="Morrice N.A."/>
            <person name="Mehlert A."/>
            <person name="Ferguson M.A.J."/>
        </authorList>
    </citation>
    <scope>PROTEIN SEQUENCE</scope>
    <scope>GLYCOSYLATION AT ASN-4; ASN-7; SER-9 AND SER-11</scope>
    <scope>PHOSPHORYLATION AT SER-9 AND SER-11</scope>
    <scope>STRUCTURE OF CARBOHYDRATE</scope>
    <scope>GPI-ANCHOR AT ASP-13</scope>
    <scope>MASS SPECTROMETRY</scope>
</reference>
<dbReference type="iPTMnet" id="P84883"/>
<dbReference type="GO" id="GO:0005886">
    <property type="term" value="C:plasma membrane"/>
    <property type="evidence" value="ECO:0000314"/>
    <property type="project" value="UniProtKB"/>
</dbReference>
<dbReference type="GO" id="GO:0098552">
    <property type="term" value="C:side of membrane"/>
    <property type="evidence" value="ECO:0007669"/>
    <property type="project" value="UniProtKB-KW"/>
</dbReference>
<name>NETNE_TRYCR</name>
<protein>
    <recommendedName>
        <fullName>GPI-anchored glycoprotein NETNES</fullName>
    </recommendedName>
</protein>
<evidence type="ECO:0000269" key="1">
    <source>
    </source>
</evidence>
<evidence type="ECO:0000305" key="2"/>
<feature type="peptide" id="PRO_0000248265" description="GPI-anchored glycoprotein NETNES" evidence="1">
    <location>
        <begin position="1"/>
        <end position="13"/>
    </location>
</feature>
<feature type="lipid moiety-binding region" description="GPI-anchor amidated aspartate" evidence="1">
    <location>
        <position position="13"/>
    </location>
</feature>
<feature type="glycosylation site" description="N-linked (GlcNAc...) (high mannose) asparagine" evidence="1">
    <location>
        <position position="4"/>
    </location>
</feature>
<feature type="glycosylation site" description="N-linked (GlcNAc...) (high mannose) asparagine" evidence="1">
    <location>
        <position position="7"/>
    </location>
</feature>
<feature type="glycosylation site" description="O-linked (Man1P...) serine" evidence="1">
    <location>
        <position position="9"/>
    </location>
</feature>
<feature type="glycosylation site" description="O-linked (Man1P...) serine" evidence="1">
    <location>
        <position position="11"/>
    </location>
</feature>
<feature type="non-terminal residue">
    <location>
        <position position="1"/>
    </location>
</feature>
<comment type="subcellular location">
    <subcellularLocation>
        <location>Cell membrane</location>
        <topology>Lipid-anchor</topology>
        <topology>GPI-anchor</topology>
    </subcellularLocation>
</comment>
<comment type="PTM">
    <text evidence="1">This peptide displays a high degree of glycan microheterogeneity resulting mainly from a variable number of mannose residues in each glycan. Both N-linked and O-linked glycans are high mannose.</text>
</comment>
<comment type="mass spectrometry">
    <text>The measured mass is that of a major glycosylated and GPI-anchored form.</text>
</comment>
<comment type="mass spectrometry">
    <text>The measured mass is that of a major glycosylated and GPI-anchored form.</text>
</comment>
<comment type="mass spectrometry">
    <text>The measured mass is that of the peptide after removal by PNGase F of all glycans and the GPI anchor.</text>
</comment>